<sequence length="57" mass="6620">MAVPKRRMSRANTRMRRSQWKADNVALQEVKIDGQTVRIPRRLVKAAQLGLVDVEQF</sequence>
<name>RL32_CORGL</name>
<feature type="chain" id="PRO_0000172334" description="Large ribosomal subunit protein bL32">
    <location>
        <begin position="1"/>
        <end position="57"/>
    </location>
</feature>
<accession>Q8NS11</accession>
<protein>
    <recommendedName>
        <fullName evidence="1">Large ribosomal subunit protein bL32</fullName>
    </recommendedName>
    <alternativeName>
        <fullName evidence="2">50S ribosomal protein L32</fullName>
    </alternativeName>
</protein>
<comment type="similarity">
    <text evidence="1">Belongs to the bacterial ribosomal protein bL32 family.</text>
</comment>
<dbReference type="EMBL" id="BA000036">
    <property type="protein sequence ID" value="BAB98266.1"/>
    <property type="molecule type" value="Genomic_DNA"/>
</dbReference>
<dbReference type="EMBL" id="BX927150">
    <property type="protein sequence ID" value="CAF19578.1"/>
    <property type="molecule type" value="Genomic_DNA"/>
</dbReference>
<dbReference type="RefSeq" id="NP_600101.1">
    <property type="nucleotide sequence ID" value="NC_003450.3"/>
</dbReference>
<dbReference type="RefSeq" id="WP_003858448.1">
    <property type="nucleotide sequence ID" value="NC_006958.1"/>
</dbReference>
<dbReference type="SMR" id="Q8NS11"/>
<dbReference type="STRING" id="196627.cg0995"/>
<dbReference type="GeneID" id="1018867"/>
<dbReference type="KEGG" id="cgb:cg0995"/>
<dbReference type="KEGG" id="cgl:Cgl0873"/>
<dbReference type="PATRIC" id="fig|196627.13.peg.857"/>
<dbReference type="eggNOG" id="ENOG5033AVR">
    <property type="taxonomic scope" value="Bacteria"/>
</dbReference>
<dbReference type="HOGENOM" id="CLU_203263_0_0_11"/>
<dbReference type="OrthoDB" id="9807363at2"/>
<dbReference type="BioCyc" id="CORYNE:G18NG-10443-MONOMER"/>
<dbReference type="Proteomes" id="UP000000582">
    <property type="component" value="Chromosome"/>
</dbReference>
<dbReference type="Proteomes" id="UP000001009">
    <property type="component" value="Chromosome"/>
</dbReference>
<dbReference type="GO" id="GO:0015934">
    <property type="term" value="C:large ribosomal subunit"/>
    <property type="evidence" value="ECO:0007669"/>
    <property type="project" value="InterPro"/>
</dbReference>
<dbReference type="GO" id="GO:0003735">
    <property type="term" value="F:structural constituent of ribosome"/>
    <property type="evidence" value="ECO:0007669"/>
    <property type="project" value="InterPro"/>
</dbReference>
<dbReference type="GO" id="GO:0006412">
    <property type="term" value="P:translation"/>
    <property type="evidence" value="ECO:0007669"/>
    <property type="project" value="UniProtKB-UniRule"/>
</dbReference>
<dbReference type="HAMAP" id="MF_00340">
    <property type="entry name" value="Ribosomal_bL32"/>
    <property type="match status" value="1"/>
</dbReference>
<dbReference type="InterPro" id="IPR002677">
    <property type="entry name" value="Ribosomal_bL32"/>
</dbReference>
<dbReference type="InterPro" id="IPR011332">
    <property type="entry name" value="Ribosomal_zn-bd"/>
</dbReference>
<dbReference type="NCBIfam" id="TIGR01031">
    <property type="entry name" value="rpmF_bact"/>
    <property type="match status" value="1"/>
</dbReference>
<dbReference type="Pfam" id="PF01783">
    <property type="entry name" value="Ribosomal_L32p"/>
    <property type="match status" value="1"/>
</dbReference>
<dbReference type="SUPFAM" id="SSF57829">
    <property type="entry name" value="Zn-binding ribosomal proteins"/>
    <property type="match status" value="1"/>
</dbReference>
<proteinExistence type="inferred from homology"/>
<keyword id="KW-1185">Reference proteome</keyword>
<keyword id="KW-0687">Ribonucleoprotein</keyword>
<keyword id="KW-0689">Ribosomal protein</keyword>
<reference key="1">
    <citation type="journal article" date="2003" name="Appl. Microbiol. Biotechnol.">
        <title>The Corynebacterium glutamicum genome: features and impacts on biotechnological processes.</title>
        <authorList>
            <person name="Ikeda M."/>
            <person name="Nakagawa S."/>
        </authorList>
    </citation>
    <scope>NUCLEOTIDE SEQUENCE [LARGE SCALE GENOMIC DNA]</scope>
    <source>
        <strain>ATCC 13032 / DSM 20300 / JCM 1318 / BCRC 11384 / CCUG 27702 / LMG 3730 / NBRC 12168 / NCIMB 10025 / NRRL B-2784 / 534</strain>
    </source>
</reference>
<reference key="2">
    <citation type="journal article" date="2003" name="J. Biotechnol.">
        <title>The complete Corynebacterium glutamicum ATCC 13032 genome sequence and its impact on the production of L-aspartate-derived amino acids and vitamins.</title>
        <authorList>
            <person name="Kalinowski J."/>
            <person name="Bathe B."/>
            <person name="Bartels D."/>
            <person name="Bischoff N."/>
            <person name="Bott M."/>
            <person name="Burkovski A."/>
            <person name="Dusch N."/>
            <person name="Eggeling L."/>
            <person name="Eikmanns B.J."/>
            <person name="Gaigalat L."/>
            <person name="Goesmann A."/>
            <person name="Hartmann M."/>
            <person name="Huthmacher K."/>
            <person name="Kraemer R."/>
            <person name="Linke B."/>
            <person name="McHardy A.C."/>
            <person name="Meyer F."/>
            <person name="Moeckel B."/>
            <person name="Pfefferle W."/>
            <person name="Puehler A."/>
            <person name="Rey D.A."/>
            <person name="Rueckert C."/>
            <person name="Rupp O."/>
            <person name="Sahm H."/>
            <person name="Wendisch V.F."/>
            <person name="Wiegraebe I."/>
            <person name="Tauch A."/>
        </authorList>
    </citation>
    <scope>NUCLEOTIDE SEQUENCE [LARGE SCALE GENOMIC DNA]</scope>
    <source>
        <strain>ATCC 13032 / DSM 20300 / JCM 1318 / BCRC 11384 / CCUG 27702 / LMG 3730 / NBRC 12168 / NCIMB 10025 / NRRL B-2784 / 534</strain>
    </source>
</reference>
<gene>
    <name evidence="1" type="primary">rpmF</name>
    <name type="ordered locus">Cgl0873</name>
    <name type="ordered locus">cg0995</name>
</gene>
<organism>
    <name type="scientific">Corynebacterium glutamicum (strain ATCC 13032 / DSM 20300 / JCM 1318 / BCRC 11384 / CCUG 27702 / LMG 3730 / NBRC 12168 / NCIMB 10025 / NRRL B-2784 / 534)</name>
    <dbReference type="NCBI Taxonomy" id="196627"/>
    <lineage>
        <taxon>Bacteria</taxon>
        <taxon>Bacillati</taxon>
        <taxon>Actinomycetota</taxon>
        <taxon>Actinomycetes</taxon>
        <taxon>Mycobacteriales</taxon>
        <taxon>Corynebacteriaceae</taxon>
        <taxon>Corynebacterium</taxon>
    </lineage>
</organism>
<evidence type="ECO:0000255" key="1">
    <source>
        <dbReference type="HAMAP-Rule" id="MF_00340"/>
    </source>
</evidence>
<evidence type="ECO:0000305" key="2"/>